<comment type="function">
    <text evidence="1">Catalyzes the 2-thiolation of uridine at the wobble position (U34) of tRNA, leading to the formation of s(2)U34.</text>
</comment>
<comment type="catalytic activity">
    <reaction evidence="1">
        <text>S-sulfanyl-L-cysteinyl-[protein] + uridine(34) in tRNA + AH2 + ATP = 2-thiouridine(34) in tRNA + L-cysteinyl-[protein] + A + AMP + diphosphate + H(+)</text>
        <dbReference type="Rhea" id="RHEA:47032"/>
        <dbReference type="Rhea" id="RHEA-COMP:10131"/>
        <dbReference type="Rhea" id="RHEA-COMP:11726"/>
        <dbReference type="Rhea" id="RHEA-COMP:11727"/>
        <dbReference type="Rhea" id="RHEA-COMP:11728"/>
        <dbReference type="ChEBI" id="CHEBI:13193"/>
        <dbReference type="ChEBI" id="CHEBI:15378"/>
        <dbReference type="ChEBI" id="CHEBI:17499"/>
        <dbReference type="ChEBI" id="CHEBI:29950"/>
        <dbReference type="ChEBI" id="CHEBI:30616"/>
        <dbReference type="ChEBI" id="CHEBI:33019"/>
        <dbReference type="ChEBI" id="CHEBI:61963"/>
        <dbReference type="ChEBI" id="CHEBI:65315"/>
        <dbReference type="ChEBI" id="CHEBI:87170"/>
        <dbReference type="ChEBI" id="CHEBI:456215"/>
        <dbReference type="EC" id="2.8.1.13"/>
    </reaction>
</comment>
<comment type="subcellular location">
    <subcellularLocation>
        <location evidence="1">Cytoplasm</location>
    </subcellularLocation>
</comment>
<comment type="similarity">
    <text evidence="1">Belongs to the MnmA/TRMU family.</text>
</comment>
<name>MNMA_STRSY</name>
<dbReference type="EC" id="2.8.1.13" evidence="1"/>
<dbReference type="EMBL" id="CP000407">
    <property type="protein sequence ID" value="ABP91136.1"/>
    <property type="molecule type" value="Genomic_DNA"/>
</dbReference>
<dbReference type="SMR" id="A4VYE7"/>
<dbReference type="STRING" id="391295.SSU05_2170"/>
<dbReference type="KEGG" id="ssu:SSU05_2170"/>
<dbReference type="eggNOG" id="COG0482">
    <property type="taxonomic scope" value="Bacteria"/>
</dbReference>
<dbReference type="HOGENOM" id="CLU_035188_1_0_9"/>
<dbReference type="GO" id="GO:0005737">
    <property type="term" value="C:cytoplasm"/>
    <property type="evidence" value="ECO:0007669"/>
    <property type="project" value="UniProtKB-SubCell"/>
</dbReference>
<dbReference type="GO" id="GO:0005524">
    <property type="term" value="F:ATP binding"/>
    <property type="evidence" value="ECO:0007669"/>
    <property type="project" value="UniProtKB-KW"/>
</dbReference>
<dbReference type="GO" id="GO:0000049">
    <property type="term" value="F:tRNA binding"/>
    <property type="evidence" value="ECO:0007669"/>
    <property type="project" value="UniProtKB-KW"/>
</dbReference>
<dbReference type="GO" id="GO:0103016">
    <property type="term" value="F:tRNA-uridine 2-sulfurtransferase activity"/>
    <property type="evidence" value="ECO:0007669"/>
    <property type="project" value="UniProtKB-EC"/>
</dbReference>
<dbReference type="GO" id="GO:0002143">
    <property type="term" value="P:tRNA wobble position uridine thiolation"/>
    <property type="evidence" value="ECO:0007669"/>
    <property type="project" value="TreeGrafter"/>
</dbReference>
<dbReference type="CDD" id="cd01998">
    <property type="entry name" value="MnmA_TRMU-like"/>
    <property type="match status" value="1"/>
</dbReference>
<dbReference type="FunFam" id="2.30.30.280:FF:000001">
    <property type="entry name" value="tRNA-specific 2-thiouridylase MnmA"/>
    <property type="match status" value="1"/>
</dbReference>
<dbReference type="FunFam" id="2.40.30.10:FF:000023">
    <property type="entry name" value="tRNA-specific 2-thiouridylase MnmA"/>
    <property type="match status" value="1"/>
</dbReference>
<dbReference type="FunFam" id="3.40.50.620:FF:000004">
    <property type="entry name" value="tRNA-specific 2-thiouridylase MnmA"/>
    <property type="match status" value="1"/>
</dbReference>
<dbReference type="Gene3D" id="2.30.30.280">
    <property type="entry name" value="Adenine nucleotide alpha hydrolases-like domains"/>
    <property type="match status" value="1"/>
</dbReference>
<dbReference type="Gene3D" id="3.40.50.620">
    <property type="entry name" value="HUPs"/>
    <property type="match status" value="1"/>
</dbReference>
<dbReference type="Gene3D" id="2.40.30.10">
    <property type="entry name" value="Translation factors"/>
    <property type="match status" value="1"/>
</dbReference>
<dbReference type="HAMAP" id="MF_00144">
    <property type="entry name" value="tRNA_thiouridyl_MnmA"/>
    <property type="match status" value="1"/>
</dbReference>
<dbReference type="InterPro" id="IPR004506">
    <property type="entry name" value="MnmA-like"/>
</dbReference>
<dbReference type="InterPro" id="IPR046885">
    <property type="entry name" value="MnmA-like_C"/>
</dbReference>
<dbReference type="InterPro" id="IPR046884">
    <property type="entry name" value="MnmA-like_central"/>
</dbReference>
<dbReference type="InterPro" id="IPR023382">
    <property type="entry name" value="MnmA-like_central_sf"/>
</dbReference>
<dbReference type="InterPro" id="IPR014729">
    <property type="entry name" value="Rossmann-like_a/b/a_fold"/>
</dbReference>
<dbReference type="NCBIfam" id="NF001138">
    <property type="entry name" value="PRK00143.1"/>
    <property type="match status" value="1"/>
</dbReference>
<dbReference type="NCBIfam" id="TIGR00420">
    <property type="entry name" value="trmU"/>
    <property type="match status" value="1"/>
</dbReference>
<dbReference type="PANTHER" id="PTHR11933:SF5">
    <property type="entry name" value="MITOCHONDRIAL TRNA-SPECIFIC 2-THIOURIDYLASE 1"/>
    <property type="match status" value="1"/>
</dbReference>
<dbReference type="PANTHER" id="PTHR11933">
    <property type="entry name" value="TRNA 5-METHYLAMINOMETHYL-2-THIOURIDYLATE -METHYLTRANSFERASE"/>
    <property type="match status" value="1"/>
</dbReference>
<dbReference type="Pfam" id="PF03054">
    <property type="entry name" value="tRNA_Me_trans"/>
    <property type="match status" value="1"/>
</dbReference>
<dbReference type="Pfam" id="PF20258">
    <property type="entry name" value="tRNA_Me_trans_C"/>
    <property type="match status" value="1"/>
</dbReference>
<dbReference type="Pfam" id="PF20259">
    <property type="entry name" value="tRNA_Me_trans_M"/>
    <property type="match status" value="1"/>
</dbReference>
<dbReference type="SUPFAM" id="SSF52402">
    <property type="entry name" value="Adenine nucleotide alpha hydrolases-like"/>
    <property type="match status" value="1"/>
</dbReference>
<protein>
    <recommendedName>
        <fullName evidence="1">tRNA-specific 2-thiouridylase MnmA</fullName>
        <ecNumber evidence="1">2.8.1.13</ecNumber>
    </recommendedName>
</protein>
<gene>
    <name evidence="1" type="primary">mnmA</name>
    <name type="ordered locus">SSU05_2170</name>
</gene>
<accession>A4VYE7</accession>
<evidence type="ECO:0000255" key="1">
    <source>
        <dbReference type="HAMAP-Rule" id="MF_00144"/>
    </source>
</evidence>
<keyword id="KW-0067">ATP-binding</keyword>
<keyword id="KW-0963">Cytoplasm</keyword>
<keyword id="KW-1015">Disulfide bond</keyword>
<keyword id="KW-0547">Nucleotide-binding</keyword>
<keyword id="KW-0694">RNA-binding</keyword>
<keyword id="KW-0808">Transferase</keyword>
<keyword id="KW-0819">tRNA processing</keyword>
<keyword id="KW-0820">tRNA-binding</keyword>
<organism>
    <name type="scientific">Streptococcus suis (strain 05ZYH33)</name>
    <dbReference type="NCBI Taxonomy" id="391295"/>
    <lineage>
        <taxon>Bacteria</taxon>
        <taxon>Bacillati</taxon>
        <taxon>Bacillota</taxon>
        <taxon>Bacilli</taxon>
        <taxon>Lactobacillales</taxon>
        <taxon>Streptococcaceae</taxon>
        <taxon>Streptococcus</taxon>
    </lineage>
</organism>
<reference key="1">
    <citation type="journal article" date="2007" name="PLoS ONE">
        <title>A glimpse of streptococcal toxic shock syndrome from comparative genomics of S. suis 2 Chinese isolates.</title>
        <authorList>
            <person name="Chen C."/>
            <person name="Tang J."/>
            <person name="Dong W."/>
            <person name="Wang C."/>
            <person name="Feng Y."/>
            <person name="Wang J."/>
            <person name="Zheng F."/>
            <person name="Pan X."/>
            <person name="Liu D."/>
            <person name="Li M."/>
            <person name="Song Y."/>
            <person name="Zhu X."/>
            <person name="Sun H."/>
            <person name="Feng T."/>
            <person name="Guo Z."/>
            <person name="Ju A."/>
            <person name="Ge J."/>
            <person name="Dong Y."/>
            <person name="Sun W."/>
            <person name="Jiang Y."/>
            <person name="Wang J."/>
            <person name="Yan J."/>
            <person name="Yang H."/>
            <person name="Wang X."/>
            <person name="Gao G.F."/>
            <person name="Yang R."/>
            <person name="Wang J."/>
            <person name="Yu J."/>
        </authorList>
    </citation>
    <scope>NUCLEOTIDE SEQUENCE [LARGE SCALE GENOMIC DNA]</scope>
    <source>
        <strain>05ZYH33</strain>
    </source>
</reference>
<feature type="chain" id="PRO_0000349816" description="tRNA-specific 2-thiouridylase MnmA">
    <location>
        <begin position="1"/>
        <end position="374"/>
    </location>
</feature>
<feature type="region of interest" description="Interaction with target base in tRNA" evidence="1">
    <location>
        <begin position="99"/>
        <end position="101"/>
    </location>
</feature>
<feature type="region of interest" description="Interaction with tRNA" evidence="1">
    <location>
        <begin position="151"/>
        <end position="153"/>
    </location>
</feature>
<feature type="region of interest" description="Interaction with tRNA" evidence="1">
    <location>
        <begin position="313"/>
        <end position="314"/>
    </location>
</feature>
<feature type="active site" description="Nucleophile" evidence="1">
    <location>
        <position position="104"/>
    </location>
</feature>
<feature type="active site" description="Cysteine persulfide intermediate" evidence="1">
    <location>
        <position position="201"/>
    </location>
</feature>
<feature type="binding site" evidence="1">
    <location>
        <begin position="13"/>
        <end position="20"/>
    </location>
    <ligand>
        <name>ATP</name>
        <dbReference type="ChEBI" id="CHEBI:30616"/>
    </ligand>
</feature>
<feature type="binding site" evidence="1">
    <location>
        <position position="39"/>
    </location>
    <ligand>
        <name>ATP</name>
        <dbReference type="ChEBI" id="CHEBI:30616"/>
    </ligand>
</feature>
<feature type="binding site" evidence="1">
    <location>
        <position position="128"/>
    </location>
    <ligand>
        <name>ATP</name>
        <dbReference type="ChEBI" id="CHEBI:30616"/>
    </ligand>
</feature>
<feature type="site" description="Interaction with tRNA" evidence="1">
    <location>
        <position position="129"/>
    </location>
</feature>
<feature type="site" description="Interaction with tRNA" evidence="1">
    <location>
        <position position="345"/>
    </location>
</feature>
<feature type="disulfide bond" description="Alternate" evidence="1">
    <location>
        <begin position="104"/>
        <end position="201"/>
    </location>
</feature>
<proteinExistence type="inferred from homology"/>
<sequence length="374" mass="41790">MSIDNSKTRVVVGMSGGVDSSVTALLLKEQGYDVIGIFMKNWDDTDENGFCTATEDYKDVAAVADQIGIPYYSVNFEKEYWDRVFEYFLAEYRAGRTPNPDVMCNKEIKFKAFLDYAMNLGADYVATGHYAQVTRDEDGTVHMLRGADNGKDQTYFLSQLSQEQLQKTMFPLGHLQKPQVREIAERAGLATAKKKDSTGICFIGEKNFKEFLGQYLPAQPGRMMTVDGRDMGEHTGLMYYTIGQRGGLGIGGQIGGDNEPWFVVGKDLSKNILYVGQGFYHESLMSTSLQASQVHFTRDMPEEFTLECTAKFRYRQPDSQVTVKVKGDKAEVIFAEPQRAITPGQAVVFYDGQECLGGGMIDMAYKDGEACQYI</sequence>